<feature type="chain" id="PRO_0000322895" description="Recombination protein RecR">
    <location>
        <begin position="1"/>
        <end position="201"/>
    </location>
</feature>
<feature type="domain" description="Toprim" evidence="1">
    <location>
        <begin position="82"/>
        <end position="177"/>
    </location>
</feature>
<feature type="zinc finger region" description="C4-type" evidence="1">
    <location>
        <begin position="59"/>
        <end position="74"/>
    </location>
</feature>
<comment type="function">
    <text evidence="1">May play a role in DNA repair. It seems to be involved in an RecBC-independent recombinational process of DNA repair. It may act with RecF and RecO.</text>
</comment>
<comment type="similarity">
    <text evidence="1">Belongs to the RecR family.</text>
</comment>
<keyword id="KW-0227">DNA damage</keyword>
<keyword id="KW-0233">DNA recombination</keyword>
<keyword id="KW-0234">DNA repair</keyword>
<keyword id="KW-0479">Metal-binding</keyword>
<keyword id="KW-1185">Reference proteome</keyword>
<keyword id="KW-0862">Zinc</keyword>
<keyword id="KW-0863">Zinc-finger</keyword>
<dbReference type="EMBL" id="CP000155">
    <property type="protein sequence ID" value="ABC29405.1"/>
    <property type="molecule type" value="Genomic_DNA"/>
</dbReference>
<dbReference type="RefSeq" id="WP_011396474.1">
    <property type="nucleotide sequence ID" value="NC_007645.1"/>
</dbReference>
<dbReference type="SMR" id="Q2SIW9"/>
<dbReference type="STRING" id="349521.HCH_02615"/>
<dbReference type="KEGG" id="hch:HCH_02615"/>
<dbReference type="eggNOG" id="COG0353">
    <property type="taxonomic scope" value="Bacteria"/>
</dbReference>
<dbReference type="HOGENOM" id="CLU_060739_1_2_6"/>
<dbReference type="OrthoDB" id="9802672at2"/>
<dbReference type="Proteomes" id="UP000000238">
    <property type="component" value="Chromosome"/>
</dbReference>
<dbReference type="GO" id="GO:0003677">
    <property type="term" value="F:DNA binding"/>
    <property type="evidence" value="ECO:0007669"/>
    <property type="project" value="UniProtKB-UniRule"/>
</dbReference>
<dbReference type="GO" id="GO:0008270">
    <property type="term" value="F:zinc ion binding"/>
    <property type="evidence" value="ECO:0007669"/>
    <property type="project" value="UniProtKB-KW"/>
</dbReference>
<dbReference type="GO" id="GO:0006310">
    <property type="term" value="P:DNA recombination"/>
    <property type="evidence" value="ECO:0007669"/>
    <property type="project" value="UniProtKB-UniRule"/>
</dbReference>
<dbReference type="GO" id="GO:0006281">
    <property type="term" value="P:DNA repair"/>
    <property type="evidence" value="ECO:0007669"/>
    <property type="project" value="UniProtKB-UniRule"/>
</dbReference>
<dbReference type="CDD" id="cd01025">
    <property type="entry name" value="TOPRIM_recR"/>
    <property type="match status" value="1"/>
</dbReference>
<dbReference type="FunFam" id="3.40.1360.10:FF:000001">
    <property type="entry name" value="Recombination protein RecR"/>
    <property type="match status" value="1"/>
</dbReference>
<dbReference type="Gene3D" id="3.40.1360.10">
    <property type="match status" value="1"/>
</dbReference>
<dbReference type="Gene3D" id="6.10.250.240">
    <property type="match status" value="1"/>
</dbReference>
<dbReference type="Gene3D" id="1.10.8.420">
    <property type="entry name" value="RecR Domain 1"/>
    <property type="match status" value="1"/>
</dbReference>
<dbReference type="HAMAP" id="MF_00017">
    <property type="entry name" value="RecR"/>
    <property type="match status" value="1"/>
</dbReference>
<dbReference type="InterPro" id="IPR000093">
    <property type="entry name" value="DNA_Rcmb_RecR"/>
</dbReference>
<dbReference type="InterPro" id="IPR023627">
    <property type="entry name" value="Rcmb_RecR"/>
</dbReference>
<dbReference type="InterPro" id="IPR015967">
    <property type="entry name" value="Rcmb_RecR_Znf"/>
</dbReference>
<dbReference type="InterPro" id="IPR006171">
    <property type="entry name" value="TOPRIM_dom"/>
</dbReference>
<dbReference type="InterPro" id="IPR034137">
    <property type="entry name" value="TOPRIM_RecR"/>
</dbReference>
<dbReference type="NCBIfam" id="TIGR00615">
    <property type="entry name" value="recR"/>
    <property type="match status" value="1"/>
</dbReference>
<dbReference type="PANTHER" id="PTHR30446">
    <property type="entry name" value="RECOMBINATION PROTEIN RECR"/>
    <property type="match status" value="1"/>
</dbReference>
<dbReference type="PANTHER" id="PTHR30446:SF0">
    <property type="entry name" value="RECOMBINATION PROTEIN RECR"/>
    <property type="match status" value="1"/>
</dbReference>
<dbReference type="Pfam" id="PF21175">
    <property type="entry name" value="RecR_C"/>
    <property type="match status" value="1"/>
</dbReference>
<dbReference type="Pfam" id="PF21176">
    <property type="entry name" value="RecR_HhH"/>
    <property type="match status" value="1"/>
</dbReference>
<dbReference type="Pfam" id="PF02132">
    <property type="entry name" value="RecR_ZnF"/>
    <property type="match status" value="1"/>
</dbReference>
<dbReference type="Pfam" id="PF13662">
    <property type="entry name" value="Toprim_4"/>
    <property type="match status" value="1"/>
</dbReference>
<dbReference type="SMART" id="SM00493">
    <property type="entry name" value="TOPRIM"/>
    <property type="match status" value="1"/>
</dbReference>
<dbReference type="SUPFAM" id="SSF111304">
    <property type="entry name" value="Recombination protein RecR"/>
    <property type="match status" value="1"/>
</dbReference>
<dbReference type="PROSITE" id="PS01300">
    <property type="entry name" value="RECR"/>
    <property type="match status" value="1"/>
</dbReference>
<dbReference type="PROSITE" id="PS50880">
    <property type="entry name" value="TOPRIM"/>
    <property type="match status" value="1"/>
</dbReference>
<evidence type="ECO:0000255" key="1">
    <source>
        <dbReference type="HAMAP-Rule" id="MF_00017"/>
    </source>
</evidence>
<accession>Q2SIW9</accession>
<protein>
    <recommendedName>
        <fullName evidence="1">Recombination protein RecR</fullName>
    </recommendedName>
</protein>
<sequence>MSSSLTPAIDQLVRCLRYLPGVGAKTATRMALNLLERDQGRAADLAIAISDALTRVKRCSRCQNFCEAELCSICESPKRDDRVLCVVESPTDVLAIEQTSDYSGRYFVLMGHLSPIDGIGPEDIGVDKLKQLLQESAVSELILATNPTVEGEATAHFIAHIAKDLNIPVSRIAHGIPLGGELGMIDSGTLSHALQGRKPFA</sequence>
<name>RECR_HAHCH</name>
<organism>
    <name type="scientific">Hahella chejuensis (strain KCTC 2396)</name>
    <dbReference type="NCBI Taxonomy" id="349521"/>
    <lineage>
        <taxon>Bacteria</taxon>
        <taxon>Pseudomonadati</taxon>
        <taxon>Pseudomonadota</taxon>
        <taxon>Gammaproteobacteria</taxon>
        <taxon>Oceanospirillales</taxon>
        <taxon>Hahellaceae</taxon>
        <taxon>Hahella</taxon>
    </lineage>
</organism>
<gene>
    <name evidence="1" type="primary">recR</name>
    <name type="ordered locus">HCH_02615</name>
</gene>
<proteinExistence type="inferred from homology"/>
<reference key="1">
    <citation type="journal article" date="2005" name="Nucleic Acids Res.">
        <title>Genomic blueprint of Hahella chejuensis, a marine microbe producing an algicidal agent.</title>
        <authorList>
            <person name="Jeong H."/>
            <person name="Yim J.H."/>
            <person name="Lee C."/>
            <person name="Choi S.-H."/>
            <person name="Park Y.K."/>
            <person name="Yoon S.H."/>
            <person name="Hur C.-G."/>
            <person name="Kang H.-Y."/>
            <person name="Kim D."/>
            <person name="Lee H.H."/>
            <person name="Park K.H."/>
            <person name="Park S.-H."/>
            <person name="Park H.-S."/>
            <person name="Lee H.K."/>
            <person name="Oh T.K."/>
            <person name="Kim J.F."/>
        </authorList>
    </citation>
    <scope>NUCLEOTIDE SEQUENCE [LARGE SCALE GENOMIC DNA]</scope>
    <source>
        <strain>KCTC 2396</strain>
    </source>
</reference>